<keyword id="KW-0067">ATP-binding</keyword>
<keyword id="KW-0963">Cytoplasm</keyword>
<keyword id="KW-0436">Ligase</keyword>
<keyword id="KW-0511">Multifunctional enzyme</keyword>
<keyword id="KW-0547">Nucleotide-binding</keyword>
<keyword id="KW-1185">Reference proteome</keyword>
<accession>O14353</accession>
<sequence length="631" mass="70632">MNVLIYNGNGASKICLLRTFQSLLPFVVPLYAMRFVDASTLEKEPWPASTALLVMPGGRDMGYCSSFNETIYRKITDFVKRGGAYLGLCAGGYFGSAVVDFRMPDSDLNVVGKRKLQFFPGTCAGPTFPGFTYDSEDGARRASIIVDGMQSSPVHTHIYFNGGGSFLETENYSNVKVVARYQETDFEKSAAIIYVKVGKGNVVLTGIHPEFSAEGSPILDKRDEKTRLELLSYILKLLGLKVPKDTSKCGQPTLTDQYLFPNNVETKRFIEKALTNKVKNQDEDTLYTFQFSDISSEIPEHQLANLDISADLSDSDNEIVKIWYGDEEKICKKAKPSFDLELYAKLINGCRFGLPIIVAPVIRSTQTLLDKNYRFLDSTNTGFTVLGNYQTAGRGRGQNMWVSPYGTLAFSFIINVDAKNFSTTPIALFQYLMALAVVRGIREYAPGYENIPAFIKWPNDVYVRVDKGGINFQGKQYMKLSGIIVTSNYRKNVLHLVVGCGINVSNLGPTVSLNTLVDEWNKNSDNPRLEKFSFEKLLASVLNQFDRYHRLLLEEGFSLILPEYYQYWLHSNQTVNLASGGKAIIQGITSDFGFLLAQLLNENNEPTTKVVHLQPDGNSFDLMRNLITRKT</sequence>
<gene>
    <name type="primary">bpl1</name>
    <name type="ORF">SPBC30D10.07c</name>
</gene>
<feature type="chain" id="PRO_0000315970" description="Biotin--protein ligase">
    <location>
        <begin position="1"/>
        <end position="631"/>
    </location>
</feature>
<feature type="domain" description="BPL/LPL catalytic" evidence="2">
    <location>
        <begin position="341"/>
        <end position="553"/>
    </location>
</feature>
<dbReference type="EC" id="6.3.4.-"/>
<dbReference type="EC" id="6.3.4.9"/>
<dbReference type="EC" id="6.3.4.10"/>
<dbReference type="EC" id="6.3.4.11"/>
<dbReference type="EC" id="6.3.4.15"/>
<dbReference type="EMBL" id="CU329671">
    <property type="protein sequence ID" value="CAB10802.1"/>
    <property type="molecule type" value="Genomic_DNA"/>
</dbReference>
<dbReference type="PIR" id="T40189">
    <property type="entry name" value="T40189"/>
</dbReference>
<dbReference type="RefSeq" id="NP_596278.1">
    <property type="nucleotide sequence ID" value="NM_001022199.2"/>
</dbReference>
<dbReference type="SMR" id="O14353"/>
<dbReference type="FunCoup" id="O14353">
    <property type="interactions" value="488"/>
</dbReference>
<dbReference type="STRING" id="284812.O14353"/>
<dbReference type="iPTMnet" id="O14353"/>
<dbReference type="SwissPalm" id="O14353"/>
<dbReference type="PaxDb" id="4896-SPBC30D10.07c.1"/>
<dbReference type="EnsemblFungi" id="SPBC30D10.07c.1">
    <property type="protein sequence ID" value="SPBC30D10.07c.1:pep"/>
    <property type="gene ID" value="SPBC30D10.07c"/>
</dbReference>
<dbReference type="GeneID" id="2540476"/>
<dbReference type="KEGG" id="spo:2540476"/>
<dbReference type="PomBase" id="SPBC30D10.07c">
    <property type="gene designation" value="bpl1"/>
</dbReference>
<dbReference type="VEuPathDB" id="FungiDB:SPBC30D10.07c"/>
<dbReference type="eggNOG" id="KOG1536">
    <property type="taxonomic scope" value="Eukaryota"/>
</dbReference>
<dbReference type="HOGENOM" id="CLU_006150_1_1_1"/>
<dbReference type="InParanoid" id="O14353"/>
<dbReference type="OMA" id="HHAFYSN"/>
<dbReference type="PhylomeDB" id="O14353"/>
<dbReference type="Reactome" id="R-SPO-196780">
    <property type="pathway name" value="Biotin transport and metabolism"/>
</dbReference>
<dbReference type="PRO" id="PR:O14353"/>
<dbReference type="Proteomes" id="UP000002485">
    <property type="component" value="Chromosome II"/>
</dbReference>
<dbReference type="GO" id="GO:0005737">
    <property type="term" value="C:cytoplasm"/>
    <property type="evidence" value="ECO:0000318"/>
    <property type="project" value="GO_Central"/>
</dbReference>
<dbReference type="GO" id="GO:0005524">
    <property type="term" value="F:ATP binding"/>
    <property type="evidence" value="ECO:0007669"/>
    <property type="project" value="UniProtKB-KW"/>
</dbReference>
<dbReference type="GO" id="GO:0004077">
    <property type="term" value="F:biotin--[biotin carboxyl-carrier protein] ligase activity"/>
    <property type="evidence" value="ECO:0000318"/>
    <property type="project" value="GO_Central"/>
</dbReference>
<dbReference type="GO" id="GO:0051604">
    <property type="term" value="P:protein maturation"/>
    <property type="evidence" value="ECO:0000303"/>
    <property type="project" value="PomBase"/>
</dbReference>
<dbReference type="GO" id="GO:0036211">
    <property type="term" value="P:protein modification process"/>
    <property type="evidence" value="ECO:0007669"/>
    <property type="project" value="InterPro"/>
</dbReference>
<dbReference type="CDD" id="cd16442">
    <property type="entry name" value="BPL"/>
    <property type="match status" value="1"/>
</dbReference>
<dbReference type="CDD" id="cd03144">
    <property type="entry name" value="GATase1_ScBLP_like"/>
    <property type="match status" value="1"/>
</dbReference>
<dbReference type="Gene3D" id="3.40.50.880">
    <property type="match status" value="1"/>
</dbReference>
<dbReference type="Gene3D" id="3.30.930.10">
    <property type="entry name" value="Bira Bifunctional Protein, Domain 2"/>
    <property type="match status" value="1"/>
</dbReference>
<dbReference type="InterPro" id="IPR045864">
    <property type="entry name" value="aa-tRNA-synth_II/BPL/LPL"/>
</dbReference>
<dbReference type="InterPro" id="IPR019197">
    <property type="entry name" value="Biotin-prot_ligase_N"/>
</dbReference>
<dbReference type="InterPro" id="IPR004408">
    <property type="entry name" value="Biotin_CoA_COase_ligase"/>
</dbReference>
<dbReference type="InterPro" id="IPR003142">
    <property type="entry name" value="BPL_C"/>
</dbReference>
<dbReference type="InterPro" id="IPR004143">
    <property type="entry name" value="BPL_LPL_catalytic"/>
</dbReference>
<dbReference type="InterPro" id="IPR029062">
    <property type="entry name" value="Class_I_gatase-like"/>
</dbReference>
<dbReference type="NCBIfam" id="TIGR00121">
    <property type="entry name" value="birA_ligase"/>
    <property type="match status" value="1"/>
</dbReference>
<dbReference type="PANTHER" id="PTHR12835">
    <property type="entry name" value="BIOTIN PROTEIN LIGASE"/>
    <property type="match status" value="1"/>
</dbReference>
<dbReference type="PANTHER" id="PTHR12835:SF5">
    <property type="entry name" value="BIOTIN--PROTEIN LIGASE"/>
    <property type="match status" value="1"/>
</dbReference>
<dbReference type="Pfam" id="PF02237">
    <property type="entry name" value="BPL_C"/>
    <property type="match status" value="1"/>
</dbReference>
<dbReference type="Pfam" id="PF03099">
    <property type="entry name" value="BPL_LplA_LipB"/>
    <property type="match status" value="1"/>
</dbReference>
<dbReference type="Pfam" id="PF09825">
    <property type="entry name" value="BPL_N"/>
    <property type="match status" value="1"/>
</dbReference>
<dbReference type="SUPFAM" id="SSF52317">
    <property type="entry name" value="Class I glutamine amidotransferase-like"/>
    <property type="match status" value="1"/>
</dbReference>
<dbReference type="SUPFAM" id="SSF55681">
    <property type="entry name" value="Class II aaRS and biotin synthetases"/>
    <property type="match status" value="1"/>
</dbReference>
<dbReference type="PROSITE" id="PS51733">
    <property type="entry name" value="BPL_LPL_CATALYTIC"/>
    <property type="match status" value="1"/>
</dbReference>
<name>BPL1_SCHPO</name>
<proteinExistence type="inferred from homology"/>
<comment type="function">
    <text evidence="1">Post-translational modification of specific protein by attachment of biotin. Acts on various carboxylases such as acetyl-CoA-carboxylase, pyruvate carboxylase, propionyl CoA carboxylase, and 3-methylcrotonyl CoA carboxylase (By similarity).</text>
</comment>
<comment type="catalytic activity">
    <reaction>
        <text>apo-[methylmalonyl-CoA:pyruvate carboxytransferase] + biotin + ATP = holo-[methylmalonyl-CoA:pyruvate carboxytransferase] + AMP + diphosphate + H(+)</text>
        <dbReference type="Rhea" id="RHEA:23668"/>
        <dbReference type="Rhea" id="RHEA-COMP:10508"/>
        <dbReference type="Rhea" id="RHEA-COMP:10509"/>
        <dbReference type="ChEBI" id="CHEBI:15378"/>
        <dbReference type="ChEBI" id="CHEBI:29969"/>
        <dbReference type="ChEBI" id="CHEBI:30616"/>
        <dbReference type="ChEBI" id="CHEBI:33019"/>
        <dbReference type="ChEBI" id="CHEBI:57586"/>
        <dbReference type="ChEBI" id="CHEBI:83144"/>
        <dbReference type="ChEBI" id="CHEBI:456215"/>
        <dbReference type="EC" id="6.3.4.9"/>
    </reaction>
</comment>
<comment type="catalytic activity">
    <reaction>
        <text>apo-[propionyl-CoA:carbon-dioxide ligase (ADP-forming)] + biotin + ATP = holo-[propionyl-CoA:carbon-dioxide ligase (ADP-forming)] + AMP + diphosphate + H(+)</text>
        <dbReference type="Rhea" id="RHEA:11204"/>
        <dbReference type="Rhea" id="RHEA-COMP:10511"/>
        <dbReference type="Rhea" id="RHEA-COMP:10512"/>
        <dbReference type="ChEBI" id="CHEBI:15378"/>
        <dbReference type="ChEBI" id="CHEBI:29969"/>
        <dbReference type="ChEBI" id="CHEBI:30616"/>
        <dbReference type="ChEBI" id="CHEBI:33019"/>
        <dbReference type="ChEBI" id="CHEBI:57586"/>
        <dbReference type="ChEBI" id="CHEBI:83144"/>
        <dbReference type="ChEBI" id="CHEBI:456215"/>
        <dbReference type="EC" id="6.3.4.10"/>
    </reaction>
</comment>
<comment type="catalytic activity">
    <reaction>
        <text>apo-[3-methylcrotonoyl-CoA:carbon-dioxide ligase (ADP-forming)] + biotin + ATP = holo-[3-methylcrotonoyl-CoA:carbon-dioxide ligase (ADP-forming)] + AMP + diphosphate + H(+)</text>
        <dbReference type="Rhea" id="RHEA:24376"/>
        <dbReference type="Rhea" id="RHEA-COMP:10514"/>
        <dbReference type="Rhea" id="RHEA-COMP:10515"/>
        <dbReference type="ChEBI" id="CHEBI:15378"/>
        <dbReference type="ChEBI" id="CHEBI:29969"/>
        <dbReference type="ChEBI" id="CHEBI:30616"/>
        <dbReference type="ChEBI" id="CHEBI:33019"/>
        <dbReference type="ChEBI" id="CHEBI:57586"/>
        <dbReference type="ChEBI" id="CHEBI:83144"/>
        <dbReference type="ChEBI" id="CHEBI:456215"/>
        <dbReference type="EC" id="6.3.4.11"/>
    </reaction>
</comment>
<comment type="catalytic activity">
    <reaction>
        <text>biotin + L-lysyl-[protein] + ATP = N(6)-biotinyl-L-lysyl-[protein] + AMP + diphosphate + H(+)</text>
        <dbReference type="Rhea" id="RHEA:11756"/>
        <dbReference type="Rhea" id="RHEA-COMP:9752"/>
        <dbReference type="Rhea" id="RHEA-COMP:10505"/>
        <dbReference type="ChEBI" id="CHEBI:15378"/>
        <dbReference type="ChEBI" id="CHEBI:29969"/>
        <dbReference type="ChEBI" id="CHEBI:30616"/>
        <dbReference type="ChEBI" id="CHEBI:33019"/>
        <dbReference type="ChEBI" id="CHEBI:57586"/>
        <dbReference type="ChEBI" id="CHEBI:83144"/>
        <dbReference type="ChEBI" id="CHEBI:456215"/>
        <dbReference type="EC" id="6.3.4.15"/>
    </reaction>
</comment>
<comment type="subunit">
    <text evidence="1">Monomer.</text>
</comment>
<comment type="subcellular location">
    <subcellularLocation>
        <location evidence="1">Cytoplasm</location>
    </subcellularLocation>
</comment>
<comment type="similarity">
    <text evidence="3">Belongs to the biotin--protein ligase family.</text>
</comment>
<evidence type="ECO:0000250" key="1"/>
<evidence type="ECO:0000255" key="2">
    <source>
        <dbReference type="PROSITE-ProRule" id="PRU01067"/>
    </source>
</evidence>
<evidence type="ECO:0000305" key="3"/>
<reference key="1">
    <citation type="journal article" date="2002" name="Nature">
        <title>The genome sequence of Schizosaccharomyces pombe.</title>
        <authorList>
            <person name="Wood V."/>
            <person name="Gwilliam R."/>
            <person name="Rajandream M.A."/>
            <person name="Lyne M.H."/>
            <person name="Lyne R."/>
            <person name="Stewart A."/>
            <person name="Sgouros J.G."/>
            <person name="Peat N."/>
            <person name="Hayles J."/>
            <person name="Baker S.G."/>
            <person name="Basham D."/>
            <person name="Bowman S."/>
            <person name="Brooks K."/>
            <person name="Brown D."/>
            <person name="Brown S."/>
            <person name="Chillingworth T."/>
            <person name="Churcher C.M."/>
            <person name="Collins M."/>
            <person name="Connor R."/>
            <person name="Cronin A."/>
            <person name="Davis P."/>
            <person name="Feltwell T."/>
            <person name="Fraser A."/>
            <person name="Gentles S."/>
            <person name="Goble A."/>
            <person name="Hamlin N."/>
            <person name="Harris D.E."/>
            <person name="Hidalgo J."/>
            <person name="Hodgson G."/>
            <person name="Holroyd S."/>
            <person name="Hornsby T."/>
            <person name="Howarth S."/>
            <person name="Huckle E.J."/>
            <person name="Hunt S."/>
            <person name="Jagels K."/>
            <person name="James K.D."/>
            <person name="Jones L."/>
            <person name="Jones M."/>
            <person name="Leather S."/>
            <person name="McDonald S."/>
            <person name="McLean J."/>
            <person name="Mooney P."/>
            <person name="Moule S."/>
            <person name="Mungall K.L."/>
            <person name="Murphy L.D."/>
            <person name="Niblett D."/>
            <person name="Odell C."/>
            <person name="Oliver K."/>
            <person name="O'Neil S."/>
            <person name="Pearson D."/>
            <person name="Quail M.A."/>
            <person name="Rabbinowitsch E."/>
            <person name="Rutherford K.M."/>
            <person name="Rutter S."/>
            <person name="Saunders D."/>
            <person name="Seeger K."/>
            <person name="Sharp S."/>
            <person name="Skelton J."/>
            <person name="Simmonds M.N."/>
            <person name="Squares R."/>
            <person name="Squares S."/>
            <person name="Stevens K."/>
            <person name="Taylor K."/>
            <person name="Taylor R.G."/>
            <person name="Tivey A."/>
            <person name="Walsh S.V."/>
            <person name="Warren T."/>
            <person name="Whitehead S."/>
            <person name="Woodward J.R."/>
            <person name="Volckaert G."/>
            <person name="Aert R."/>
            <person name="Robben J."/>
            <person name="Grymonprez B."/>
            <person name="Weltjens I."/>
            <person name="Vanstreels E."/>
            <person name="Rieger M."/>
            <person name="Schaefer M."/>
            <person name="Mueller-Auer S."/>
            <person name="Gabel C."/>
            <person name="Fuchs M."/>
            <person name="Duesterhoeft A."/>
            <person name="Fritzc C."/>
            <person name="Holzer E."/>
            <person name="Moestl D."/>
            <person name="Hilbert H."/>
            <person name="Borzym K."/>
            <person name="Langer I."/>
            <person name="Beck A."/>
            <person name="Lehrach H."/>
            <person name="Reinhardt R."/>
            <person name="Pohl T.M."/>
            <person name="Eger P."/>
            <person name="Zimmermann W."/>
            <person name="Wedler H."/>
            <person name="Wambutt R."/>
            <person name="Purnelle B."/>
            <person name="Goffeau A."/>
            <person name="Cadieu E."/>
            <person name="Dreano S."/>
            <person name="Gloux S."/>
            <person name="Lelaure V."/>
            <person name="Mottier S."/>
            <person name="Galibert F."/>
            <person name="Aves S.J."/>
            <person name="Xiang Z."/>
            <person name="Hunt C."/>
            <person name="Moore K."/>
            <person name="Hurst S.M."/>
            <person name="Lucas M."/>
            <person name="Rochet M."/>
            <person name="Gaillardin C."/>
            <person name="Tallada V.A."/>
            <person name="Garzon A."/>
            <person name="Thode G."/>
            <person name="Daga R.R."/>
            <person name="Cruzado L."/>
            <person name="Jimenez J."/>
            <person name="Sanchez M."/>
            <person name="del Rey F."/>
            <person name="Benito J."/>
            <person name="Dominguez A."/>
            <person name="Revuelta J.L."/>
            <person name="Moreno S."/>
            <person name="Armstrong J."/>
            <person name="Forsburg S.L."/>
            <person name="Cerutti L."/>
            <person name="Lowe T."/>
            <person name="McCombie W.R."/>
            <person name="Paulsen I."/>
            <person name="Potashkin J."/>
            <person name="Shpakovski G.V."/>
            <person name="Ussery D."/>
            <person name="Barrell B.G."/>
            <person name="Nurse P."/>
        </authorList>
    </citation>
    <scope>NUCLEOTIDE SEQUENCE [LARGE SCALE GENOMIC DNA]</scope>
    <source>
        <strain>972 / ATCC 24843</strain>
    </source>
</reference>
<protein>
    <recommendedName>
        <fullName>Biotin--protein ligase</fullName>
        <ecNumber>6.3.4.-</ecNumber>
    </recommendedName>
    <alternativeName>
        <fullName>Biotin apo-protein ligase</fullName>
    </alternativeName>
    <domain>
        <recommendedName>
            <fullName>Biotin--[methylmalonyl-CoA-carboxytransferase] ligase</fullName>
            <ecNumber>6.3.4.9</ecNumber>
        </recommendedName>
    </domain>
    <domain>
        <recommendedName>
            <fullName>Biotin--[propionyl-CoA-carboxylase [ATP-hydrolyzing]] ligase</fullName>
            <ecNumber>6.3.4.10</ecNumber>
        </recommendedName>
        <alternativeName>
            <fullName>Holocarboxylase synthetase</fullName>
            <shortName>HCS</shortName>
        </alternativeName>
    </domain>
    <domain>
        <recommendedName>
            <fullName>Biotin--[methylcrotonoyl-CoA-carboxylase] ligase</fullName>
            <ecNumber>6.3.4.11</ecNumber>
        </recommendedName>
    </domain>
    <domain>
        <recommendedName>
            <fullName>Biotin--[acetyl-CoA-carboxylase] ligase</fullName>
            <ecNumber>6.3.4.15</ecNumber>
        </recommendedName>
    </domain>
</protein>
<organism>
    <name type="scientific">Schizosaccharomyces pombe (strain 972 / ATCC 24843)</name>
    <name type="common">Fission yeast</name>
    <dbReference type="NCBI Taxonomy" id="284812"/>
    <lineage>
        <taxon>Eukaryota</taxon>
        <taxon>Fungi</taxon>
        <taxon>Dikarya</taxon>
        <taxon>Ascomycota</taxon>
        <taxon>Taphrinomycotina</taxon>
        <taxon>Schizosaccharomycetes</taxon>
        <taxon>Schizosaccharomycetales</taxon>
        <taxon>Schizosaccharomycetaceae</taxon>
        <taxon>Schizosaccharomyces</taxon>
    </lineage>
</organism>